<dbReference type="EMBL" id="CP000431">
    <property type="protein sequence ID" value="ABG97935.1"/>
    <property type="molecule type" value="Genomic_DNA"/>
</dbReference>
<dbReference type="RefSeq" id="WP_003938068.1">
    <property type="nucleotide sequence ID" value="NC_008268.1"/>
</dbReference>
<dbReference type="SMR" id="Q0S3F1"/>
<dbReference type="GeneID" id="93803280"/>
<dbReference type="KEGG" id="rha:RHA1_ro06158"/>
<dbReference type="eggNOG" id="COG0257">
    <property type="taxonomic scope" value="Bacteria"/>
</dbReference>
<dbReference type="HOGENOM" id="CLU_135723_6_2_11"/>
<dbReference type="OrthoDB" id="9802520at2"/>
<dbReference type="Proteomes" id="UP000008710">
    <property type="component" value="Chromosome"/>
</dbReference>
<dbReference type="GO" id="GO:0005737">
    <property type="term" value="C:cytoplasm"/>
    <property type="evidence" value="ECO:0007669"/>
    <property type="project" value="UniProtKB-ARBA"/>
</dbReference>
<dbReference type="GO" id="GO:1990904">
    <property type="term" value="C:ribonucleoprotein complex"/>
    <property type="evidence" value="ECO:0007669"/>
    <property type="project" value="UniProtKB-KW"/>
</dbReference>
<dbReference type="GO" id="GO:0005840">
    <property type="term" value="C:ribosome"/>
    <property type="evidence" value="ECO:0007669"/>
    <property type="project" value="UniProtKB-KW"/>
</dbReference>
<dbReference type="GO" id="GO:0003735">
    <property type="term" value="F:structural constituent of ribosome"/>
    <property type="evidence" value="ECO:0007669"/>
    <property type="project" value="InterPro"/>
</dbReference>
<dbReference type="GO" id="GO:0006412">
    <property type="term" value="P:translation"/>
    <property type="evidence" value="ECO:0007669"/>
    <property type="project" value="UniProtKB-UniRule"/>
</dbReference>
<dbReference type="HAMAP" id="MF_00251">
    <property type="entry name" value="Ribosomal_bL36"/>
    <property type="match status" value="1"/>
</dbReference>
<dbReference type="InterPro" id="IPR000473">
    <property type="entry name" value="Ribosomal_bL36"/>
</dbReference>
<dbReference type="InterPro" id="IPR035977">
    <property type="entry name" value="Ribosomal_bL36_sp"/>
</dbReference>
<dbReference type="NCBIfam" id="TIGR01022">
    <property type="entry name" value="rpmJ_bact"/>
    <property type="match status" value="1"/>
</dbReference>
<dbReference type="PANTHER" id="PTHR42888">
    <property type="entry name" value="50S RIBOSOMAL PROTEIN L36, CHLOROPLASTIC"/>
    <property type="match status" value="1"/>
</dbReference>
<dbReference type="PANTHER" id="PTHR42888:SF1">
    <property type="entry name" value="LARGE RIBOSOMAL SUBUNIT PROTEIN BL36C"/>
    <property type="match status" value="1"/>
</dbReference>
<dbReference type="Pfam" id="PF00444">
    <property type="entry name" value="Ribosomal_L36"/>
    <property type="match status" value="1"/>
</dbReference>
<dbReference type="SUPFAM" id="SSF57840">
    <property type="entry name" value="Ribosomal protein L36"/>
    <property type="match status" value="1"/>
</dbReference>
<dbReference type="PROSITE" id="PS00828">
    <property type="entry name" value="RIBOSOMAL_L36"/>
    <property type="match status" value="1"/>
</dbReference>
<name>RL36_RHOJR</name>
<accession>Q0S3F1</accession>
<feature type="chain" id="PRO_0000302282" description="Large ribosomal subunit protein bL36">
    <location>
        <begin position="1"/>
        <end position="37"/>
    </location>
</feature>
<keyword id="KW-0687">Ribonucleoprotein</keyword>
<keyword id="KW-0689">Ribosomal protein</keyword>
<gene>
    <name evidence="1" type="primary">rpmJ</name>
    <name type="ordered locus">RHA1_ro06158</name>
</gene>
<sequence length="37" mass="4394">MKVQPSVKKICEKCKVIRRNGRVMVICENLRHKQRQG</sequence>
<reference key="1">
    <citation type="journal article" date="2006" name="Proc. Natl. Acad. Sci. U.S.A.">
        <title>The complete genome of Rhodococcus sp. RHA1 provides insights into a catabolic powerhouse.</title>
        <authorList>
            <person name="McLeod M.P."/>
            <person name="Warren R.L."/>
            <person name="Hsiao W.W.L."/>
            <person name="Araki N."/>
            <person name="Myhre M."/>
            <person name="Fernandes C."/>
            <person name="Miyazawa D."/>
            <person name="Wong W."/>
            <person name="Lillquist A.L."/>
            <person name="Wang D."/>
            <person name="Dosanjh M."/>
            <person name="Hara H."/>
            <person name="Petrescu A."/>
            <person name="Morin R.D."/>
            <person name="Yang G."/>
            <person name="Stott J.M."/>
            <person name="Schein J.E."/>
            <person name="Shin H."/>
            <person name="Smailus D."/>
            <person name="Siddiqui A.S."/>
            <person name="Marra M.A."/>
            <person name="Jones S.J.M."/>
            <person name="Holt R."/>
            <person name="Brinkman F.S.L."/>
            <person name="Miyauchi K."/>
            <person name="Fukuda M."/>
            <person name="Davies J.E."/>
            <person name="Mohn W.W."/>
            <person name="Eltis L.D."/>
        </authorList>
    </citation>
    <scope>NUCLEOTIDE SEQUENCE [LARGE SCALE GENOMIC DNA]</scope>
    <source>
        <strain>RHA1</strain>
    </source>
</reference>
<protein>
    <recommendedName>
        <fullName evidence="1">Large ribosomal subunit protein bL36</fullName>
    </recommendedName>
    <alternativeName>
        <fullName evidence="2">50S ribosomal protein L36</fullName>
    </alternativeName>
</protein>
<comment type="similarity">
    <text evidence="1">Belongs to the bacterial ribosomal protein bL36 family.</text>
</comment>
<organism>
    <name type="scientific">Rhodococcus jostii (strain RHA1)</name>
    <dbReference type="NCBI Taxonomy" id="101510"/>
    <lineage>
        <taxon>Bacteria</taxon>
        <taxon>Bacillati</taxon>
        <taxon>Actinomycetota</taxon>
        <taxon>Actinomycetes</taxon>
        <taxon>Mycobacteriales</taxon>
        <taxon>Nocardiaceae</taxon>
        <taxon>Rhodococcus</taxon>
    </lineage>
</organism>
<evidence type="ECO:0000255" key="1">
    <source>
        <dbReference type="HAMAP-Rule" id="MF_00251"/>
    </source>
</evidence>
<evidence type="ECO:0000305" key="2"/>
<proteinExistence type="inferred from homology"/>